<dbReference type="EC" id="2.7.1.21" evidence="1"/>
<dbReference type="EMBL" id="CP000036">
    <property type="protein sequence ID" value="ABB66430.1"/>
    <property type="molecule type" value="Genomic_DNA"/>
</dbReference>
<dbReference type="RefSeq" id="WP_000068079.1">
    <property type="nucleotide sequence ID" value="NC_007613.1"/>
</dbReference>
<dbReference type="SMR" id="Q31ZS8"/>
<dbReference type="GeneID" id="93775304"/>
<dbReference type="KEGG" id="sbo:SBO_1831"/>
<dbReference type="HOGENOM" id="CLU_064400_2_1_6"/>
<dbReference type="Proteomes" id="UP000007067">
    <property type="component" value="Chromosome"/>
</dbReference>
<dbReference type="GO" id="GO:0005829">
    <property type="term" value="C:cytosol"/>
    <property type="evidence" value="ECO:0007669"/>
    <property type="project" value="TreeGrafter"/>
</dbReference>
<dbReference type="GO" id="GO:0005524">
    <property type="term" value="F:ATP binding"/>
    <property type="evidence" value="ECO:0007669"/>
    <property type="project" value="UniProtKB-UniRule"/>
</dbReference>
<dbReference type="GO" id="GO:0004797">
    <property type="term" value="F:thymidine kinase activity"/>
    <property type="evidence" value="ECO:0007669"/>
    <property type="project" value="UniProtKB-UniRule"/>
</dbReference>
<dbReference type="GO" id="GO:0008270">
    <property type="term" value="F:zinc ion binding"/>
    <property type="evidence" value="ECO:0007669"/>
    <property type="project" value="UniProtKB-UniRule"/>
</dbReference>
<dbReference type="GO" id="GO:0071897">
    <property type="term" value="P:DNA biosynthetic process"/>
    <property type="evidence" value="ECO:0007669"/>
    <property type="project" value="UniProtKB-KW"/>
</dbReference>
<dbReference type="GO" id="GO:0046104">
    <property type="term" value="P:thymidine metabolic process"/>
    <property type="evidence" value="ECO:0007669"/>
    <property type="project" value="TreeGrafter"/>
</dbReference>
<dbReference type="FunFam" id="3.30.60.20:FF:000017">
    <property type="entry name" value="Thymidine kinase"/>
    <property type="match status" value="1"/>
</dbReference>
<dbReference type="FunFam" id="3.40.50.300:FF:000323">
    <property type="entry name" value="Thymidine kinase"/>
    <property type="match status" value="1"/>
</dbReference>
<dbReference type="Gene3D" id="3.30.60.20">
    <property type="match status" value="1"/>
</dbReference>
<dbReference type="Gene3D" id="3.40.50.300">
    <property type="entry name" value="P-loop containing nucleotide triphosphate hydrolases"/>
    <property type="match status" value="1"/>
</dbReference>
<dbReference type="HAMAP" id="MF_00124">
    <property type="entry name" value="Thymidine_kinase"/>
    <property type="match status" value="1"/>
</dbReference>
<dbReference type="InterPro" id="IPR027417">
    <property type="entry name" value="P-loop_NTPase"/>
</dbReference>
<dbReference type="InterPro" id="IPR001267">
    <property type="entry name" value="Thymidine_kinase"/>
</dbReference>
<dbReference type="InterPro" id="IPR020633">
    <property type="entry name" value="Thymidine_kinase_CS"/>
</dbReference>
<dbReference type="NCBIfam" id="NF003298">
    <property type="entry name" value="PRK04296.1-3"/>
    <property type="match status" value="1"/>
</dbReference>
<dbReference type="NCBIfam" id="NF003300">
    <property type="entry name" value="PRK04296.1-5"/>
    <property type="match status" value="1"/>
</dbReference>
<dbReference type="PANTHER" id="PTHR11441">
    <property type="entry name" value="THYMIDINE KINASE"/>
    <property type="match status" value="1"/>
</dbReference>
<dbReference type="PANTHER" id="PTHR11441:SF0">
    <property type="entry name" value="THYMIDINE KINASE, CYTOSOLIC"/>
    <property type="match status" value="1"/>
</dbReference>
<dbReference type="Pfam" id="PF00265">
    <property type="entry name" value="TK"/>
    <property type="match status" value="1"/>
</dbReference>
<dbReference type="PIRSF" id="PIRSF035805">
    <property type="entry name" value="TK_cell"/>
    <property type="match status" value="1"/>
</dbReference>
<dbReference type="SUPFAM" id="SSF57716">
    <property type="entry name" value="Glucocorticoid receptor-like (DNA-binding domain)"/>
    <property type="match status" value="1"/>
</dbReference>
<dbReference type="SUPFAM" id="SSF52540">
    <property type="entry name" value="P-loop containing nucleoside triphosphate hydrolases"/>
    <property type="match status" value="1"/>
</dbReference>
<dbReference type="PROSITE" id="PS00603">
    <property type="entry name" value="TK_CELLULAR_TYPE"/>
    <property type="match status" value="1"/>
</dbReference>
<sequence length="205" mass="23399">MAQLYFYYSAMNAGKSTALLQSSYNYQERGMRTVVYTAEIDDRFGAGKVSSRIGLSSPAKLFNQNSSLFDEIRAEHEQQAIHCVLVDECQFLTRQQVYELSEVVDQLDIPVLCYGLRTDFRGELFIGSQYLLAWSDKLVELKTICFCGRKASMVLRLDQAGRPYNEGEQVVIGGNERYVSVCRKHYKEALQVGSLTAIQERHRHD</sequence>
<comment type="catalytic activity">
    <reaction evidence="1">
        <text>thymidine + ATP = dTMP + ADP + H(+)</text>
        <dbReference type="Rhea" id="RHEA:19129"/>
        <dbReference type="ChEBI" id="CHEBI:15378"/>
        <dbReference type="ChEBI" id="CHEBI:17748"/>
        <dbReference type="ChEBI" id="CHEBI:30616"/>
        <dbReference type="ChEBI" id="CHEBI:63528"/>
        <dbReference type="ChEBI" id="CHEBI:456216"/>
        <dbReference type="EC" id="2.7.1.21"/>
    </reaction>
</comment>
<comment type="subunit">
    <text evidence="1">Homotetramer.</text>
</comment>
<comment type="subcellular location">
    <subcellularLocation>
        <location evidence="1">Cytoplasm</location>
    </subcellularLocation>
</comment>
<comment type="similarity">
    <text evidence="1">Belongs to the thymidine kinase family.</text>
</comment>
<keyword id="KW-0067">ATP-binding</keyword>
<keyword id="KW-0963">Cytoplasm</keyword>
<keyword id="KW-0237">DNA synthesis</keyword>
<keyword id="KW-0418">Kinase</keyword>
<keyword id="KW-0479">Metal-binding</keyword>
<keyword id="KW-0547">Nucleotide-binding</keyword>
<keyword id="KW-0808">Transferase</keyword>
<keyword id="KW-0862">Zinc</keyword>
<feature type="chain" id="PRO_0000242803" description="Thymidine kinase">
    <location>
        <begin position="1"/>
        <end position="205"/>
    </location>
</feature>
<feature type="active site" description="Proton acceptor" evidence="1">
    <location>
        <position position="88"/>
    </location>
</feature>
<feature type="binding site" evidence="1">
    <location>
        <begin position="9"/>
        <end position="16"/>
    </location>
    <ligand>
        <name>ATP</name>
        <dbReference type="ChEBI" id="CHEBI:30616"/>
    </ligand>
</feature>
<feature type="binding site" evidence="1">
    <location>
        <begin position="87"/>
        <end position="90"/>
    </location>
    <ligand>
        <name>ATP</name>
        <dbReference type="ChEBI" id="CHEBI:30616"/>
    </ligand>
</feature>
<feature type="binding site" evidence="1">
    <location>
        <position position="145"/>
    </location>
    <ligand>
        <name>Zn(2+)</name>
        <dbReference type="ChEBI" id="CHEBI:29105"/>
    </ligand>
</feature>
<feature type="binding site" evidence="1">
    <location>
        <position position="147"/>
    </location>
    <ligand>
        <name>Zn(2+)</name>
        <dbReference type="ChEBI" id="CHEBI:29105"/>
    </ligand>
</feature>
<feature type="binding site" evidence="1">
    <location>
        <position position="182"/>
    </location>
    <ligand>
        <name>Zn(2+)</name>
        <dbReference type="ChEBI" id="CHEBI:29105"/>
    </ligand>
</feature>
<feature type="binding site" evidence="1">
    <location>
        <position position="185"/>
    </location>
    <ligand>
        <name>Zn(2+)</name>
        <dbReference type="ChEBI" id="CHEBI:29105"/>
    </ligand>
</feature>
<organism>
    <name type="scientific">Shigella boydii serotype 4 (strain Sb227)</name>
    <dbReference type="NCBI Taxonomy" id="300268"/>
    <lineage>
        <taxon>Bacteria</taxon>
        <taxon>Pseudomonadati</taxon>
        <taxon>Pseudomonadota</taxon>
        <taxon>Gammaproteobacteria</taxon>
        <taxon>Enterobacterales</taxon>
        <taxon>Enterobacteriaceae</taxon>
        <taxon>Shigella</taxon>
    </lineage>
</organism>
<reference key="1">
    <citation type="journal article" date="2005" name="Nucleic Acids Res.">
        <title>Genome dynamics and diversity of Shigella species, the etiologic agents of bacillary dysentery.</title>
        <authorList>
            <person name="Yang F."/>
            <person name="Yang J."/>
            <person name="Zhang X."/>
            <person name="Chen L."/>
            <person name="Jiang Y."/>
            <person name="Yan Y."/>
            <person name="Tang X."/>
            <person name="Wang J."/>
            <person name="Xiong Z."/>
            <person name="Dong J."/>
            <person name="Xue Y."/>
            <person name="Zhu Y."/>
            <person name="Xu X."/>
            <person name="Sun L."/>
            <person name="Chen S."/>
            <person name="Nie H."/>
            <person name="Peng J."/>
            <person name="Xu J."/>
            <person name="Wang Y."/>
            <person name="Yuan Z."/>
            <person name="Wen Y."/>
            <person name="Yao Z."/>
            <person name="Shen Y."/>
            <person name="Qiang B."/>
            <person name="Hou Y."/>
            <person name="Yu J."/>
            <person name="Jin Q."/>
        </authorList>
    </citation>
    <scope>NUCLEOTIDE SEQUENCE [LARGE SCALE GENOMIC DNA]</scope>
    <source>
        <strain>Sb227</strain>
    </source>
</reference>
<name>KITH_SHIBS</name>
<evidence type="ECO:0000255" key="1">
    <source>
        <dbReference type="HAMAP-Rule" id="MF_00124"/>
    </source>
</evidence>
<protein>
    <recommendedName>
        <fullName evidence="1">Thymidine kinase</fullName>
        <ecNumber evidence="1">2.7.1.21</ecNumber>
    </recommendedName>
</protein>
<accession>Q31ZS8</accession>
<gene>
    <name evidence="1" type="primary">tdk</name>
    <name type="ordered locus">SBO_1831</name>
</gene>
<proteinExistence type="inferred from homology"/>